<organism>
    <name type="scientific">Opisthacanthus cayaporum</name>
    <name type="common">South American scorpion</name>
    <dbReference type="NCBI Taxonomy" id="573324"/>
    <lineage>
        <taxon>Eukaryota</taxon>
        <taxon>Metazoa</taxon>
        <taxon>Ecdysozoa</taxon>
        <taxon>Arthropoda</taxon>
        <taxon>Chelicerata</taxon>
        <taxon>Arachnida</taxon>
        <taxon>Scorpiones</taxon>
        <taxon>Iurida</taxon>
        <taxon>Scorpionoidea</taxon>
        <taxon>Hemiscorpiidae</taxon>
        <taxon>Opisthacanthus</taxon>
    </lineage>
</organism>
<dbReference type="EMBL" id="FM998753">
    <property type="protein sequence ID" value="CAX51399.1"/>
    <property type="molecule type" value="mRNA"/>
</dbReference>
<dbReference type="SMR" id="C5J895"/>
<dbReference type="GO" id="GO:0005576">
    <property type="term" value="C:extracellular region"/>
    <property type="evidence" value="ECO:0007669"/>
    <property type="project" value="UniProtKB-SubCell"/>
</dbReference>
<dbReference type="GO" id="GO:0090729">
    <property type="term" value="F:toxin activity"/>
    <property type="evidence" value="ECO:0007669"/>
    <property type="project" value="UniProtKB-KW"/>
</dbReference>
<dbReference type="InterPro" id="IPR029277">
    <property type="entry name" value="SVWC_dom"/>
</dbReference>
<dbReference type="Pfam" id="PF15430">
    <property type="entry name" value="SVWC"/>
    <property type="match status" value="1"/>
</dbReference>
<dbReference type="SMART" id="SM01318">
    <property type="entry name" value="SVWC"/>
    <property type="match status" value="1"/>
</dbReference>
<accession>C5J895</accession>
<protein>
    <recommendedName>
        <fullName>Venom toxin OcyC11</fullName>
        <shortName>VTX</shortName>
    </recommendedName>
</protein>
<name>LA1_OPICY</name>
<proteinExistence type="evidence at protein level"/>
<reference key="1">
    <citation type="journal article" date="2009" name="Toxicon">
        <title>Cloning and characterization of cDNA sequences encoding for new venom peptides of the Brazilian scorpion Opisthacanthus cayaporum.</title>
        <authorList>
            <person name="Silva E.C."/>
            <person name="Camargos T.S."/>
            <person name="Maranhao A.Q."/>
            <person name="Silva-Pereira I."/>
            <person name="Silva L.P."/>
            <person name="Possani L.D."/>
            <person name="Schwartz E.F."/>
        </authorList>
    </citation>
    <scope>NUCLEOTIDE SEQUENCE [MRNA]</scope>
    <source>
        <tissue>Venom gland</tissue>
    </source>
</reference>
<reference key="2">
    <citation type="journal article" date="2008" name="Toxicon">
        <title>Mass spectrometry analysis, amino acid sequence and biological activity of venom components from the Brazilian scorpion Opisthacanthus cayaporum.</title>
        <authorList>
            <person name="Schwartz E.F."/>
            <person name="Camargos T.S."/>
            <person name="Zamudio F.Z."/>
            <person name="Silva L.P."/>
            <person name="Bloch C. Jr."/>
            <person name="Caixeta F."/>
            <person name="Schwartz C.A."/>
            <person name="Possani L.D."/>
        </authorList>
    </citation>
    <scope>MASS SPECTROMETRY</scope>
    <source>
        <tissue>Venom</tissue>
    </source>
</reference>
<evidence type="ECO:0000269" key="1">
    <source>
    </source>
</evidence>
<evidence type="ECO:0000305" key="2"/>
<feature type="signal peptide">
    <location>
        <begin position="1"/>
        <end position="20"/>
    </location>
</feature>
<feature type="chain" id="PRO_0000413159" description="Venom toxin OcyC11">
    <location>
        <begin position="21"/>
        <end position="98"/>
    </location>
</feature>
<sequence length="98" mass="10894">MKIACTLVLFVMLRCYVNARNIPGTCRTHTGIILLSGEEWKDPNHCSTYRCSIFDGEAELEGVTCAAYHVPPHCRLVSAANELYPQCCPTVICSDKSR</sequence>
<comment type="subcellular location">
    <subcellularLocation>
        <location>Secreted</location>
    </subcellularLocation>
</comment>
<comment type="tissue specificity">
    <text>Expressed by the venom gland.</text>
</comment>
<comment type="PTM">
    <text>Contains 4 disulfide bonds.</text>
</comment>
<comment type="mass spectrometry" mass="8558.0" method="Electrospray" evidence="1"/>
<comment type="similarity">
    <text evidence="2">Belongs to the scorpion La1-like peptide family.</text>
</comment>
<keyword id="KW-1015">Disulfide bond</keyword>
<keyword id="KW-0964">Secreted</keyword>
<keyword id="KW-0732">Signal</keyword>
<keyword id="KW-0800">Toxin</keyword>